<feature type="chain" id="PRO_0000376710" description="2,3,4,5-tetrahydropyridine-2,6-dicarboxylate N-acetyltransferase">
    <location>
        <begin position="1"/>
        <end position="232"/>
    </location>
</feature>
<sequence>MTATKMNAQEIIQFIANAEKKTSVKVTFEGQLATAVPSSVVKLGNVLFGDWKDVAPLLEGLVENQDYVVEQDARNSAVPLLDKRAINARIEPGAIIRDQVEIGDNAVIMMGAVINIGAEIGAGTMIDMGAILGGRAIVGKNSHVGAGAVLAGVIEPASAEPVRVGDNVLIGANAVVIEGVQIGSGSVVAAGAIVTQDVPENVVVAGVPARIIKEIDAQTQQKTALEDALRTL</sequence>
<protein>
    <recommendedName>
        <fullName evidence="1">2,3,4,5-tetrahydropyridine-2,6-dicarboxylate N-acetyltransferase</fullName>
        <ecNumber evidence="1">2.3.1.89</ecNumber>
    </recommendedName>
    <alternativeName>
        <fullName evidence="1">Tetrahydrodipicolinate N-acetyltransferase</fullName>
        <shortName evidence="1">THP acetyltransferase</shortName>
        <shortName evidence="1">Tetrahydropicolinate acetylase</shortName>
    </alternativeName>
</protein>
<proteinExistence type="inferred from homology"/>
<organism>
    <name type="scientific">Streptococcus pneumoniae (strain ATCC BAA-255 / R6)</name>
    <dbReference type="NCBI Taxonomy" id="171101"/>
    <lineage>
        <taxon>Bacteria</taxon>
        <taxon>Bacillati</taxon>
        <taxon>Bacillota</taxon>
        <taxon>Bacilli</taxon>
        <taxon>Lactobacillales</taxon>
        <taxon>Streptococcaceae</taxon>
        <taxon>Streptococcus</taxon>
    </lineage>
</organism>
<reference key="1">
    <citation type="journal article" date="2001" name="J. Bacteriol.">
        <title>Genome of the bacterium Streptococcus pneumoniae strain R6.</title>
        <authorList>
            <person name="Hoskins J."/>
            <person name="Alborn W.E. Jr."/>
            <person name="Arnold J."/>
            <person name="Blaszczak L.C."/>
            <person name="Burgett S."/>
            <person name="DeHoff B.S."/>
            <person name="Estrem S.T."/>
            <person name="Fritz L."/>
            <person name="Fu D.-J."/>
            <person name="Fuller W."/>
            <person name="Geringer C."/>
            <person name="Gilmour R."/>
            <person name="Glass J.S."/>
            <person name="Khoja H."/>
            <person name="Kraft A.R."/>
            <person name="Lagace R.E."/>
            <person name="LeBlanc D.J."/>
            <person name="Lee L.N."/>
            <person name="Lefkowitz E.J."/>
            <person name="Lu J."/>
            <person name="Matsushima P."/>
            <person name="McAhren S.M."/>
            <person name="McHenney M."/>
            <person name="McLeaster K."/>
            <person name="Mundy C.W."/>
            <person name="Nicas T.I."/>
            <person name="Norris F.H."/>
            <person name="O'Gara M."/>
            <person name="Peery R.B."/>
            <person name="Robertson G.T."/>
            <person name="Rockey P."/>
            <person name="Sun P.-M."/>
            <person name="Winkler M.E."/>
            <person name="Yang Y."/>
            <person name="Young-Bellido M."/>
            <person name="Zhao G."/>
            <person name="Zook C.A."/>
            <person name="Baltz R.H."/>
            <person name="Jaskunas S.R."/>
            <person name="Rosteck P.R. Jr."/>
            <person name="Skatrud P.L."/>
            <person name="Glass J.I."/>
        </authorList>
    </citation>
    <scope>NUCLEOTIDE SEQUENCE [LARGE SCALE GENOMIC DNA]</scope>
    <source>
        <strain>ATCC BAA-255 / R6</strain>
    </source>
</reference>
<accession>Q8DN54</accession>
<dbReference type="EC" id="2.3.1.89" evidence="1"/>
<dbReference type="EMBL" id="AE007317">
    <property type="protein sequence ID" value="AAL00709.1"/>
    <property type="molecule type" value="Genomic_DNA"/>
</dbReference>
<dbReference type="PIR" id="H98109">
    <property type="entry name" value="H98109"/>
</dbReference>
<dbReference type="RefSeq" id="NP_359498.1">
    <property type="nucleotide sequence ID" value="NC_003098.1"/>
</dbReference>
<dbReference type="SMR" id="Q8DN54"/>
<dbReference type="STRING" id="171101.spr1907"/>
<dbReference type="KEGG" id="spr:spr1907"/>
<dbReference type="PATRIC" id="fig|171101.6.peg.2056"/>
<dbReference type="eggNOG" id="COG2171">
    <property type="taxonomic scope" value="Bacteria"/>
</dbReference>
<dbReference type="HOGENOM" id="CLU_103751_0_0_9"/>
<dbReference type="UniPathway" id="UPA00034">
    <property type="reaction ID" value="UER00022"/>
</dbReference>
<dbReference type="Proteomes" id="UP000000586">
    <property type="component" value="Chromosome"/>
</dbReference>
<dbReference type="GO" id="GO:0047200">
    <property type="term" value="F:tetrahydrodipicolinate N-acetyltransferase activity"/>
    <property type="evidence" value="ECO:0007669"/>
    <property type="project" value="UniProtKB-EC"/>
</dbReference>
<dbReference type="GO" id="GO:0019877">
    <property type="term" value="P:diaminopimelate biosynthetic process"/>
    <property type="evidence" value="ECO:0007669"/>
    <property type="project" value="UniProtKB-UniRule"/>
</dbReference>
<dbReference type="GO" id="GO:0009089">
    <property type="term" value="P:lysine biosynthetic process via diaminopimelate"/>
    <property type="evidence" value="ECO:0007669"/>
    <property type="project" value="UniProtKB-UniRule"/>
</dbReference>
<dbReference type="Gene3D" id="2.160.10.10">
    <property type="entry name" value="Hexapeptide repeat proteins"/>
    <property type="match status" value="1"/>
</dbReference>
<dbReference type="Gene3D" id="3.30.70.250">
    <property type="entry name" value="Malonyl-CoA ACP transacylase, ACP-binding"/>
    <property type="match status" value="1"/>
</dbReference>
<dbReference type="HAMAP" id="MF_01691">
    <property type="entry name" value="DapH"/>
    <property type="match status" value="1"/>
</dbReference>
<dbReference type="InterPro" id="IPR019873">
    <property type="entry name" value="DapH"/>
</dbReference>
<dbReference type="InterPro" id="IPR013710">
    <property type="entry name" value="DapH_N"/>
</dbReference>
<dbReference type="InterPro" id="IPR001451">
    <property type="entry name" value="Hexapep"/>
</dbReference>
<dbReference type="InterPro" id="IPR018357">
    <property type="entry name" value="Hexapep_transf_CS"/>
</dbReference>
<dbReference type="InterPro" id="IPR050179">
    <property type="entry name" value="Trans_hexapeptide_repeat"/>
</dbReference>
<dbReference type="InterPro" id="IPR011004">
    <property type="entry name" value="Trimer_LpxA-like_sf"/>
</dbReference>
<dbReference type="NCBIfam" id="TIGR03532">
    <property type="entry name" value="DapD_Ac"/>
    <property type="match status" value="1"/>
</dbReference>
<dbReference type="PANTHER" id="PTHR43300:SF10">
    <property type="entry name" value="2,3,4,5-TETRAHYDROPYRIDINE-2,6-DICARBOXYLATE N-ACETYLTRANSFERASE"/>
    <property type="match status" value="1"/>
</dbReference>
<dbReference type="PANTHER" id="PTHR43300">
    <property type="entry name" value="ACETYLTRANSFERASE"/>
    <property type="match status" value="1"/>
</dbReference>
<dbReference type="Pfam" id="PF08503">
    <property type="entry name" value="DapH_N"/>
    <property type="match status" value="1"/>
</dbReference>
<dbReference type="Pfam" id="PF00132">
    <property type="entry name" value="Hexapep"/>
    <property type="match status" value="1"/>
</dbReference>
<dbReference type="Pfam" id="PF14602">
    <property type="entry name" value="Hexapep_2"/>
    <property type="match status" value="2"/>
</dbReference>
<dbReference type="SUPFAM" id="SSF51161">
    <property type="entry name" value="Trimeric LpxA-like enzymes"/>
    <property type="match status" value="1"/>
</dbReference>
<dbReference type="PROSITE" id="PS00101">
    <property type="entry name" value="HEXAPEP_TRANSFERASES"/>
    <property type="match status" value="2"/>
</dbReference>
<evidence type="ECO:0000255" key="1">
    <source>
        <dbReference type="HAMAP-Rule" id="MF_01691"/>
    </source>
</evidence>
<comment type="function">
    <text evidence="1">Catalyzes the transfer of an acetyl group from acetyl-CoA to tetrahydrodipicolinate.</text>
</comment>
<comment type="catalytic activity">
    <reaction evidence="1">
        <text>(S)-2,3,4,5-tetrahydrodipicolinate + acetyl-CoA + H2O = L-2-acetamido-6-oxoheptanedioate + CoA</text>
        <dbReference type="Rhea" id="RHEA:13085"/>
        <dbReference type="ChEBI" id="CHEBI:15377"/>
        <dbReference type="ChEBI" id="CHEBI:16845"/>
        <dbReference type="ChEBI" id="CHEBI:57287"/>
        <dbReference type="ChEBI" id="CHEBI:57288"/>
        <dbReference type="ChEBI" id="CHEBI:58117"/>
        <dbReference type="EC" id="2.3.1.89"/>
    </reaction>
</comment>
<comment type="pathway">
    <text evidence="1">Amino-acid biosynthesis; L-lysine biosynthesis via DAP pathway; LL-2,6-diaminopimelate from (S)-tetrahydrodipicolinate (acetylase route): step 1/3.</text>
</comment>
<comment type="similarity">
    <text evidence="1">Belongs to the transferase hexapeptide repeat family. DapH subfamily.</text>
</comment>
<name>DAPH_STRR6</name>
<keyword id="KW-0012">Acyltransferase</keyword>
<keyword id="KW-0028">Amino-acid biosynthesis</keyword>
<keyword id="KW-0220">Diaminopimelate biosynthesis</keyword>
<keyword id="KW-0457">Lysine biosynthesis</keyword>
<keyword id="KW-1185">Reference proteome</keyword>
<keyword id="KW-0677">Repeat</keyword>
<keyword id="KW-0808">Transferase</keyword>
<gene>
    <name evidence="1" type="primary">dapH</name>
    <name type="ordered locus">spr1907</name>
</gene>